<gene>
    <name evidence="1" type="primary">hemH</name>
    <name type="ordered locus">lpl0468</name>
</gene>
<feature type="chain" id="PRO_0000175156" description="Ferrochelatase">
    <location>
        <begin position="1"/>
        <end position="331"/>
    </location>
</feature>
<feature type="binding site" evidence="1">
    <location>
        <position position="187"/>
    </location>
    <ligand>
        <name>Fe cation</name>
        <dbReference type="ChEBI" id="CHEBI:24875"/>
    </ligand>
</feature>
<feature type="binding site" evidence="1">
    <location>
        <position position="286"/>
    </location>
    <ligand>
        <name>Fe cation</name>
        <dbReference type="ChEBI" id="CHEBI:24875"/>
    </ligand>
</feature>
<dbReference type="EC" id="4.98.1.1" evidence="1"/>
<dbReference type="EMBL" id="CR628337">
    <property type="protein sequence ID" value="CAH14698.1"/>
    <property type="molecule type" value="Genomic_DNA"/>
</dbReference>
<dbReference type="RefSeq" id="WP_011214684.1">
    <property type="nucleotide sequence ID" value="NC_006369.1"/>
</dbReference>
<dbReference type="SMR" id="Q5WZB4"/>
<dbReference type="KEGG" id="lpf:lpl0468"/>
<dbReference type="LegioList" id="lpl0468"/>
<dbReference type="HOGENOM" id="CLU_018884_0_1_6"/>
<dbReference type="UniPathway" id="UPA00252">
    <property type="reaction ID" value="UER00325"/>
</dbReference>
<dbReference type="Proteomes" id="UP000002517">
    <property type="component" value="Chromosome"/>
</dbReference>
<dbReference type="GO" id="GO:0005737">
    <property type="term" value="C:cytoplasm"/>
    <property type="evidence" value="ECO:0007669"/>
    <property type="project" value="UniProtKB-SubCell"/>
</dbReference>
<dbReference type="GO" id="GO:0004325">
    <property type="term" value="F:ferrochelatase activity"/>
    <property type="evidence" value="ECO:0007669"/>
    <property type="project" value="UniProtKB-UniRule"/>
</dbReference>
<dbReference type="GO" id="GO:0046872">
    <property type="term" value="F:metal ion binding"/>
    <property type="evidence" value="ECO:0007669"/>
    <property type="project" value="UniProtKB-KW"/>
</dbReference>
<dbReference type="GO" id="GO:0006783">
    <property type="term" value="P:heme biosynthetic process"/>
    <property type="evidence" value="ECO:0007669"/>
    <property type="project" value="UniProtKB-UniRule"/>
</dbReference>
<dbReference type="CDD" id="cd00419">
    <property type="entry name" value="Ferrochelatase_C"/>
    <property type="match status" value="1"/>
</dbReference>
<dbReference type="CDD" id="cd03411">
    <property type="entry name" value="Ferrochelatase_N"/>
    <property type="match status" value="1"/>
</dbReference>
<dbReference type="Gene3D" id="3.40.50.1400">
    <property type="match status" value="2"/>
</dbReference>
<dbReference type="HAMAP" id="MF_00323">
    <property type="entry name" value="Ferrochelatase"/>
    <property type="match status" value="1"/>
</dbReference>
<dbReference type="InterPro" id="IPR001015">
    <property type="entry name" value="Ferrochelatase"/>
</dbReference>
<dbReference type="InterPro" id="IPR033644">
    <property type="entry name" value="Ferrochelatase_C"/>
</dbReference>
<dbReference type="InterPro" id="IPR033659">
    <property type="entry name" value="Ferrochelatase_N"/>
</dbReference>
<dbReference type="NCBIfam" id="TIGR00109">
    <property type="entry name" value="hemH"/>
    <property type="match status" value="1"/>
</dbReference>
<dbReference type="PANTHER" id="PTHR11108">
    <property type="entry name" value="FERROCHELATASE"/>
    <property type="match status" value="1"/>
</dbReference>
<dbReference type="PANTHER" id="PTHR11108:SF1">
    <property type="entry name" value="FERROCHELATASE, MITOCHONDRIAL"/>
    <property type="match status" value="1"/>
</dbReference>
<dbReference type="Pfam" id="PF00762">
    <property type="entry name" value="Ferrochelatase"/>
    <property type="match status" value="1"/>
</dbReference>
<dbReference type="SUPFAM" id="SSF53800">
    <property type="entry name" value="Chelatase"/>
    <property type="match status" value="1"/>
</dbReference>
<reference key="1">
    <citation type="journal article" date="2004" name="Nat. Genet.">
        <title>Evidence in the Legionella pneumophila genome for exploitation of host cell functions and high genome plasticity.</title>
        <authorList>
            <person name="Cazalet C."/>
            <person name="Rusniok C."/>
            <person name="Brueggemann H."/>
            <person name="Zidane N."/>
            <person name="Magnier A."/>
            <person name="Ma L."/>
            <person name="Tichit M."/>
            <person name="Jarraud S."/>
            <person name="Bouchier C."/>
            <person name="Vandenesch F."/>
            <person name="Kunst F."/>
            <person name="Etienne J."/>
            <person name="Glaser P."/>
            <person name="Buchrieser C."/>
        </authorList>
    </citation>
    <scope>NUCLEOTIDE SEQUENCE [LARGE SCALE GENOMIC DNA]</scope>
    <source>
        <strain>Lens</strain>
    </source>
</reference>
<name>HEMH_LEGPL</name>
<sequence>MRRGLLLLNLGTPDNADIRAVKLYLREFLTDKRVIDLPTIPRYILVYCLILPFRSPKSAQAYQSIWTEKGSPLLYHSQNLVTKLQSALKDEYKIALGMRYGTPSITTALAELKDCHSLTILPLFPQYSSAATGSAIEKTLSYLANQEIIPSIKIIRDFYQRPEYIQAQAKIMKPYIKDNFHVLFSYHGIPERHIHKSGCDTLCPQTCTPIYDKNQACYRAQCYQTSLLLAKELQLGTHQYTTAFQSRLGKTPWIKPYTDEIFAELISKGIKNIVVSCPSFVADCLETLEEIGIRAKEQWEKLGGEQFILTPCMNDHPEWIKAIQSIVNEQF</sequence>
<comment type="function">
    <text evidence="1">Catalyzes the ferrous insertion into protoporphyrin IX.</text>
</comment>
<comment type="catalytic activity">
    <reaction evidence="1">
        <text>heme b + 2 H(+) = protoporphyrin IX + Fe(2+)</text>
        <dbReference type="Rhea" id="RHEA:22584"/>
        <dbReference type="ChEBI" id="CHEBI:15378"/>
        <dbReference type="ChEBI" id="CHEBI:29033"/>
        <dbReference type="ChEBI" id="CHEBI:57306"/>
        <dbReference type="ChEBI" id="CHEBI:60344"/>
        <dbReference type="EC" id="4.98.1.1"/>
    </reaction>
</comment>
<comment type="pathway">
    <text evidence="1">Porphyrin-containing compound metabolism; protoheme biosynthesis; protoheme from protoporphyrin-IX: step 1/1.</text>
</comment>
<comment type="subcellular location">
    <subcellularLocation>
        <location evidence="1">Cytoplasm</location>
    </subcellularLocation>
</comment>
<comment type="similarity">
    <text evidence="1">Belongs to the ferrochelatase family.</text>
</comment>
<evidence type="ECO:0000255" key="1">
    <source>
        <dbReference type="HAMAP-Rule" id="MF_00323"/>
    </source>
</evidence>
<organism>
    <name type="scientific">Legionella pneumophila (strain Lens)</name>
    <dbReference type="NCBI Taxonomy" id="297245"/>
    <lineage>
        <taxon>Bacteria</taxon>
        <taxon>Pseudomonadati</taxon>
        <taxon>Pseudomonadota</taxon>
        <taxon>Gammaproteobacteria</taxon>
        <taxon>Legionellales</taxon>
        <taxon>Legionellaceae</taxon>
        <taxon>Legionella</taxon>
    </lineage>
</organism>
<accession>Q5WZB4</accession>
<keyword id="KW-0963">Cytoplasm</keyword>
<keyword id="KW-0350">Heme biosynthesis</keyword>
<keyword id="KW-0408">Iron</keyword>
<keyword id="KW-0456">Lyase</keyword>
<keyword id="KW-0479">Metal-binding</keyword>
<keyword id="KW-0627">Porphyrin biosynthesis</keyword>
<proteinExistence type="inferred from homology"/>
<protein>
    <recommendedName>
        <fullName evidence="1">Ferrochelatase</fullName>
        <ecNumber evidence="1">4.98.1.1</ecNumber>
    </recommendedName>
    <alternativeName>
        <fullName evidence="1">Heme synthase</fullName>
    </alternativeName>
    <alternativeName>
        <fullName evidence="1">Protoheme ferro-lyase</fullName>
    </alternativeName>
</protein>